<name>PTRA_ECO57</name>
<comment type="function">
    <text evidence="1">Endopeptidase that degrades small peptides of less than 7 kDa, such as glucagon and insulin.</text>
</comment>
<comment type="catalytic activity">
    <reaction evidence="2">
        <text>Preferential cleavage of 16-Tyr-|-Leu-17 and 25-Phe-|-Tyr-26 bonds of oxidized insulin B chain. Also acts on other substrates of Mw less than 7 kDa such as insulin and glucagon.</text>
        <dbReference type="EC" id="3.4.24.55"/>
    </reaction>
</comment>
<comment type="cofactor">
    <cofactor evidence="1">
        <name>Zn(2+)</name>
        <dbReference type="ChEBI" id="CHEBI:29105"/>
    </cofactor>
    <text evidence="1">Binds 1 zinc ion per subunit.</text>
</comment>
<comment type="subunit">
    <text evidence="1">Monomer.</text>
</comment>
<comment type="subcellular location">
    <subcellularLocation>
        <location evidence="1">Periplasm</location>
    </subcellularLocation>
</comment>
<comment type="similarity">
    <text evidence="3">Belongs to the peptidase M16 family.</text>
</comment>
<gene>
    <name type="primary">ptrA</name>
    <name type="synonym">ptr</name>
    <name type="ordered locus">Z4138</name>
    <name type="ordered locus">ECs3678</name>
</gene>
<proteinExistence type="inferred from homology"/>
<reference key="1">
    <citation type="journal article" date="2001" name="Nature">
        <title>Genome sequence of enterohaemorrhagic Escherichia coli O157:H7.</title>
        <authorList>
            <person name="Perna N.T."/>
            <person name="Plunkett G. III"/>
            <person name="Burland V."/>
            <person name="Mau B."/>
            <person name="Glasner J.D."/>
            <person name="Rose D.J."/>
            <person name="Mayhew G.F."/>
            <person name="Evans P.S."/>
            <person name="Gregor J."/>
            <person name="Kirkpatrick H.A."/>
            <person name="Posfai G."/>
            <person name="Hackett J."/>
            <person name="Klink S."/>
            <person name="Boutin A."/>
            <person name="Shao Y."/>
            <person name="Miller L."/>
            <person name="Grotbeck E.J."/>
            <person name="Davis N.W."/>
            <person name="Lim A."/>
            <person name="Dimalanta E.T."/>
            <person name="Potamousis K."/>
            <person name="Apodaca J."/>
            <person name="Anantharaman T.S."/>
            <person name="Lin J."/>
            <person name="Yen G."/>
            <person name="Schwartz D.C."/>
            <person name="Welch R.A."/>
            <person name="Blattner F.R."/>
        </authorList>
    </citation>
    <scope>NUCLEOTIDE SEQUENCE [LARGE SCALE GENOMIC DNA]</scope>
    <source>
        <strain>O157:H7 / EDL933 / ATCC 700927 / EHEC</strain>
    </source>
</reference>
<reference key="2">
    <citation type="journal article" date="2001" name="DNA Res.">
        <title>Complete genome sequence of enterohemorrhagic Escherichia coli O157:H7 and genomic comparison with a laboratory strain K-12.</title>
        <authorList>
            <person name="Hayashi T."/>
            <person name="Makino K."/>
            <person name="Ohnishi M."/>
            <person name="Kurokawa K."/>
            <person name="Ishii K."/>
            <person name="Yokoyama K."/>
            <person name="Han C.-G."/>
            <person name="Ohtsubo E."/>
            <person name="Nakayama K."/>
            <person name="Murata T."/>
            <person name="Tanaka M."/>
            <person name="Tobe T."/>
            <person name="Iida T."/>
            <person name="Takami H."/>
            <person name="Honda T."/>
            <person name="Sasakawa C."/>
            <person name="Ogasawara N."/>
            <person name="Yasunaga T."/>
            <person name="Kuhara S."/>
            <person name="Shiba T."/>
            <person name="Hattori M."/>
            <person name="Shinagawa H."/>
        </authorList>
    </citation>
    <scope>NUCLEOTIDE SEQUENCE [LARGE SCALE GENOMIC DNA]</scope>
    <source>
        <strain>O157:H7 / Sakai / RIMD 0509952 / EHEC</strain>
    </source>
</reference>
<feature type="signal peptide" evidence="1">
    <location>
        <begin position="1"/>
        <end position="23"/>
    </location>
</feature>
<feature type="chain" id="PRO_0000026759" description="Protease 3">
    <location>
        <begin position="24"/>
        <end position="962"/>
    </location>
</feature>
<feature type="active site" description="Proton acceptor" evidence="2">
    <location>
        <position position="91"/>
    </location>
</feature>
<feature type="binding site" evidence="2">
    <location>
        <position position="88"/>
    </location>
    <ligand>
        <name>Zn(2+)</name>
        <dbReference type="ChEBI" id="CHEBI:29105"/>
    </ligand>
</feature>
<feature type="binding site" evidence="2">
    <location>
        <position position="92"/>
    </location>
    <ligand>
        <name>Zn(2+)</name>
        <dbReference type="ChEBI" id="CHEBI:29105"/>
    </ligand>
</feature>
<feature type="binding site" evidence="2">
    <location>
        <position position="169"/>
    </location>
    <ligand>
        <name>Zn(2+)</name>
        <dbReference type="ChEBI" id="CHEBI:29105"/>
    </ligand>
</feature>
<organism>
    <name type="scientific">Escherichia coli O157:H7</name>
    <dbReference type="NCBI Taxonomy" id="83334"/>
    <lineage>
        <taxon>Bacteria</taxon>
        <taxon>Pseudomonadati</taxon>
        <taxon>Pseudomonadota</taxon>
        <taxon>Gammaproteobacteria</taxon>
        <taxon>Enterobacterales</taxon>
        <taxon>Enterobacteriaceae</taxon>
        <taxon>Escherichia</taxon>
    </lineage>
</organism>
<dbReference type="EC" id="3.4.24.55"/>
<dbReference type="EMBL" id="AE005174">
    <property type="protein sequence ID" value="AAG57932.1"/>
    <property type="molecule type" value="Genomic_DNA"/>
</dbReference>
<dbReference type="EMBL" id="BA000007">
    <property type="protein sequence ID" value="BAB37101.1"/>
    <property type="molecule type" value="Genomic_DNA"/>
</dbReference>
<dbReference type="PIR" id="F91088">
    <property type="entry name" value="F91088"/>
</dbReference>
<dbReference type="PIR" id="H85933">
    <property type="entry name" value="H85933"/>
</dbReference>
<dbReference type="RefSeq" id="NP_311705.1">
    <property type="nucleotide sequence ID" value="NC_002695.1"/>
</dbReference>
<dbReference type="RefSeq" id="WP_001138211.1">
    <property type="nucleotide sequence ID" value="NZ_VOAI01000003.1"/>
</dbReference>
<dbReference type="SMR" id="Q8X6M8"/>
<dbReference type="STRING" id="155864.Z4138"/>
<dbReference type="MEROPS" id="M16.001"/>
<dbReference type="GeneID" id="916510"/>
<dbReference type="KEGG" id="ece:Z4138"/>
<dbReference type="KEGG" id="ecs:ECs_3678"/>
<dbReference type="PATRIC" id="fig|386585.9.peg.3845"/>
<dbReference type="eggNOG" id="COG1025">
    <property type="taxonomic scope" value="Bacteria"/>
</dbReference>
<dbReference type="HOGENOM" id="CLU_004639_1_3_6"/>
<dbReference type="OMA" id="WIFDEMK"/>
<dbReference type="Proteomes" id="UP000000558">
    <property type="component" value="Chromosome"/>
</dbReference>
<dbReference type="Proteomes" id="UP000002519">
    <property type="component" value="Chromosome"/>
</dbReference>
<dbReference type="GO" id="GO:0005737">
    <property type="term" value="C:cytoplasm"/>
    <property type="evidence" value="ECO:0007669"/>
    <property type="project" value="UniProtKB-ARBA"/>
</dbReference>
<dbReference type="GO" id="GO:0042597">
    <property type="term" value="C:periplasmic space"/>
    <property type="evidence" value="ECO:0007669"/>
    <property type="project" value="UniProtKB-SubCell"/>
</dbReference>
<dbReference type="GO" id="GO:0046872">
    <property type="term" value="F:metal ion binding"/>
    <property type="evidence" value="ECO:0007669"/>
    <property type="project" value="UniProtKB-KW"/>
</dbReference>
<dbReference type="GO" id="GO:0004222">
    <property type="term" value="F:metalloendopeptidase activity"/>
    <property type="evidence" value="ECO:0007669"/>
    <property type="project" value="UniProtKB-EC"/>
</dbReference>
<dbReference type="GO" id="GO:0006508">
    <property type="term" value="P:proteolysis"/>
    <property type="evidence" value="ECO:0007669"/>
    <property type="project" value="UniProtKB-KW"/>
</dbReference>
<dbReference type="FunFam" id="3.30.830.10:FF:000012">
    <property type="entry name" value="Protease 3"/>
    <property type="match status" value="1"/>
</dbReference>
<dbReference type="Gene3D" id="3.30.830.10">
    <property type="entry name" value="Metalloenzyme, LuxS/M16 peptidase-like"/>
    <property type="match status" value="4"/>
</dbReference>
<dbReference type="InterPro" id="IPR011249">
    <property type="entry name" value="Metalloenz_LuxS/M16"/>
</dbReference>
<dbReference type="InterPro" id="IPR011765">
    <property type="entry name" value="Pept_M16_N"/>
</dbReference>
<dbReference type="InterPro" id="IPR001431">
    <property type="entry name" value="Pept_M16_Zn_BS"/>
</dbReference>
<dbReference type="InterPro" id="IPR050626">
    <property type="entry name" value="Peptidase_M16"/>
</dbReference>
<dbReference type="InterPro" id="IPR007863">
    <property type="entry name" value="Peptidase_M16_C"/>
</dbReference>
<dbReference type="InterPro" id="IPR032632">
    <property type="entry name" value="Peptidase_M16_M"/>
</dbReference>
<dbReference type="InterPro" id="IPR054734">
    <property type="entry name" value="PqqF-like_C_4"/>
</dbReference>
<dbReference type="NCBIfam" id="NF011681">
    <property type="entry name" value="PRK15101.1"/>
    <property type="match status" value="1"/>
</dbReference>
<dbReference type="PANTHER" id="PTHR43690:SF18">
    <property type="entry name" value="INSULIN-DEGRADING ENZYME-RELATED"/>
    <property type="match status" value="1"/>
</dbReference>
<dbReference type="PANTHER" id="PTHR43690">
    <property type="entry name" value="NARDILYSIN"/>
    <property type="match status" value="1"/>
</dbReference>
<dbReference type="Pfam" id="PF00675">
    <property type="entry name" value="Peptidase_M16"/>
    <property type="match status" value="1"/>
</dbReference>
<dbReference type="Pfam" id="PF05193">
    <property type="entry name" value="Peptidase_M16_C"/>
    <property type="match status" value="1"/>
</dbReference>
<dbReference type="Pfam" id="PF16187">
    <property type="entry name" value="Peptidase_M16_M"/>
    <property type="match status" value="1"/>
</dbReference>
<dbReference type="Pfam" id="PF22456">
    <property type="entry name" value="PqqF-like_C_4"/>
    <property type="match status" value="1"/>
</dbReference>
<dbReference type="SUPFAM" id="SSF63411">
    <property type="entry name" value="LuxS/MPP-like metallohydrolase"/>
    <property type="match status" value="4"/>
</dbReference>
<dbReference type="PROSITE" id="PS00143">
    <property type="entry name" value="INSULINASE"/>
    <property type="match status" value="1"/>
</dbReference>
<evidence type="ECO:0000250" key="1"/>
<evidence type="ECO:0000255" key="2">
    <source>
        <dbReference type="PROSITE-ProRule" id="PRU10096"/>
    </source>
</evidence>
<evidence type="ECO:0000305" key="3"/>
<accession>Q8X6M8</accession>
<protein>
    <recommendedName>
        <fullName>Protease 3</fullName>
        <ecNumber>3.4.24.55</ecNumber>
    </recommendedName>
    <alternativeName>
        <fullName>Pitrilysin</fullName>
    </alternativeName>
    <alternativeName>
        <fullName>Protease III</fullName>
    </alternativeName>
    <alternativeName>
        <fullName>Protease pi</fullName>
    </alternativeName>
</protein>
<keyword id="KW-0378">Hydrolase</keyword>
<keyword id="KW-0460">Magnesium</keyword>
<keyword id="KW-0479">Metal-binding</keyword>
<keyword id="KW-0482">Metalloprotease</keyword>
<keyword id="KW-0574">Periplasm</keyword>
<keyword id="KW-0645">Protease</keyword>
<keyword id="KW-1185">Reference proteome</keyword>
<keyword id="KW-0732">Signal</keyword>
<keyword id="KW-0862">Zinc</keyword>
<sequence>MPRSTWFKALLLLVALWAPLSQAETGWQPIQETIRKSDKDNRQYQAIRLDNGMVVLLVSDPQAVKSLSALVVPVGSLEDPEAYQGLAHYLEHMSLMGSKKYPQADSLAEYLKMHGGSHNASTAPYRTAFYLEVENDALPGAVDRLADAIAEPLLDKKYAERERNAVNAELTMARTRDGMRMAQVSAETINPAHPGSKFSGGNLETLSDKPGNPVQQALKDFHEKYYSANLMKAVIYSNKPLPELAKMAADTFGRVPNKESKKPEITVPVVTDAQKGIIIHYVPALPRKVLRVEFRIDNNSAKFRSKTDELITYLIGNRSPGTLSDWLQKQGLVEGISANSDPIVNGNSGVLAISASLTDKGLANRDQVVAAIFSYLNLLREKGIDKQYFDELANVLDIDFRYPSITRDMDYVEWLADTMIRVPVEHTLDAVNIADRYDAKAVKERLAMMTPQNARIWYISPKEPHNKTAYFVDAPYQVDKISEQTFADWQQKAANIALSLPELNPYIPDDFSLIKSEKKYDHPELIVDESNLRVVYAPSRYFSSEPKADVSLILRNPKAMDSARNQVMFALNDYLAGLALDQLSNQASVGGISFSTNANNGLMVNANGYTQRLPQLFQALLEGYFSYTATEDQLEQAKSWYNQMMDSAEKGKAFEQAIMPAQMLSQVPYFSRDERRKILPSITLKEVLAYRDALKSGARPEFMVIGNMTEAQATTLARDVQKQLGADGSEWCRNKDVVVDKKQSVIFEKAGNSTDSALAAVFVPTGYDEYTSSAYSSLLGQIVQPWFYNQLRTEEQLGYAVFAFPMSVGRQWGMGFLLQSNDKQPSFLWERYKAFFPTAEAKLRAMKPDEFAQIQQAVITQMLQAPQTLGEEALKLSKDFDRGNMRFDSRDKIVAQIKLLTPQKLADFFHQAVVEPQGMAILSQISGSQNGKAEYVHPEGWKVWENVSALQQTMPLMSEKNE</sequence>